<evidence type="ECO:0000250" key="1">
    <source>
        <dbReference type="UniProtKB" id="L0E2Z4"/>
    </source>
</evidence>
<evidence type="ECO:0000250" key="2">
    <source>
        <dbReference type="UniProtKB" id="O93868"/>
    </source>
</evidence>
<evidence type="ECO:0000269" key="3">
    <source>
    </source>
</evidence>
<evidence type="ECO:0000269" key="4">
    <source>
    </source>
</evidence>
<evidence type="ECO:0000303" key="5">
    <source>
    </source>
</evidence>
<evidence type="ECO:0000303" key="6">
    <source>
    </source>
</evidence>
<evidence type="ECO:0000305" key="7"/>
<evidence type="ECO:0000305" key="8">
    <source>
    </source>
</evidence>
<evidence type="ECO:0000305" key="9">
    <source>
    </source>
</evidence>
<organism>
    <name type="scientific">Pestalotiopsis fici (strain W106-1 / CGMCC3.15140)</name>
    <dbReference type="NCBI Taxonomy" id="1229662"/>
    <lineage>
        <taxon>Eukaryota</taxon>
        <taxon>Fungi</taxon>
        <taxon>Dikarya</taxon>
        <taxon>Ascomycota</taxon>
        <taxon>Pezizomycotina</taxon>
        <taxon>Sordariomycetes</taxon>
        <taxon>Xylariomycetidae</taxon>
        <taxon>Amphisphaeriales</taxon>
        <taxon>Sporocadaceae</taxon>
        <taxon>Pestalotiopsis</taxon>
    </lineage>
</organism>
<dbReference type="EC" id="1.1.1.252" evidence="4"/>
<dbReference type="EMBL" id="KI912112">
    <property type="protein sequence ID" value="ETS82101.1"/>
    <property type="molecule type" value="Genomic_DNA"/>
</dbReference>
<dbReference type="RefSeq" id="XP_007833875.1">
    <property type="nucleotide sequence ID" value="XM_007835684.1"/>
</dbReference>
<dbReference type="SMR" id="W3XAA0"/>
<dbReference type="STRING" id="1229662.W3XAA0"/>
<dbReference type="GeneID" id="19272116"/>
<dbReference type="KEGG" id="pfy:PFICI_07103"/>
<dbReference type="eggNOG" id="KOG0725">
    <property type="taxonomic scope" value="Eukaryota"/>
</dbReference>
<dbReference type="HOGENOM" id="CLU_010194_1_3_1"/>
<dbReference type="InParanoid" id="W3XAA0"/>
<dbReference type="OMA" id="CQKHMVD"/>
<dbReference type="OrthoDB" id="47007at2759"/>
<dbReference type="UniPathway" id="UPA00785"/>
<dbReference type="Proteomes" id="UP000030651">
    <property type="component" value="Unassembled WGS sequence"/>
</dbReference>
<dbReference type="GO" id="GO:0048038">
    <property type="term" value="F:quinone binding"/>
    <property type="evidence" value="ECO:0007669"/>
    <property type="project" value="TreeGrafter"/>
</dbReference>
<dbReference type="GO" id="GO:0047039">
    <property type="term" value="F:tetrahydroxynaphthalene reductase activity"/>
    <property type="evidence" value="ECO:0007669"/>
    <property type="project" value="UniProtKB-EC"/>
</dbReference>
<dbReference type="GO" id="GO:0006633">
    <property type="term" value="P:fatty acid biosynthetic process"/>
    <property type="evidence" value="ECO:0007669"/>
    <property type="project" value="TreeGrafter"/>
</dbReference>
<dbReference type="GO" id="GO:0042438">
    <property type="term" value="P:melanin biosynthetic process"/>
    <property type="evidence" value="ECO:0007669"/>
    <property type="project" value="UniProtKB-UniPathway"/>
</dbReference>
<dbReference type="FunFam" id="3.40.50.720:FF:000084">
    <property type="entry name" value="Short-chain dehydrogenase reductase"/>
    <property type="match status" value="1"/>
</dbReference>
<dbReference type="Gene3D" id="3.40.50.720">
    <property type="entry name" value="NAD(P)-binding Rossmann-like Domain"/>
    <property type="match status" value="1"/>
</dbReference>
<dbReference type="InterPro" id="IPR036291">
    <property type="entry name" value="NAD(P)-bd_dom_sf"/>
</dbReference>
<dbReference type="InterPro" id="IPR020904">
    <property type="entry name" value="Sc_DH/Rdtase_CS"/>
</dbReference>
<dbReference type="InterPro" id="IPR002347">
    <property type="entry name" value="SDR_fam"/>
</dbReference>
<dbReference type="PANTHER" id="PTHR42760:SF133">
    <property type="entry name" value="3-OXOACYL-[ACYL-CARRIER-PROTEIN] REDUCTASE"/>
    <property type="match status" value="1"/>
</dbReference>
<dbReference type="PANTHER" id="PTHR42760">
    <property type="entry name" value="SHORT-CHAIN DEHYDROGENASES/REDUCTASES FAMILY MEMBER"/>
    <property type="match status" value="1"/>
</dbReference>
<dbReference type="Pfam" id="PF13561">
    <property type="entry name" value="adh_short_C2"/>
    <property type="match status" value="1"/>
</dbReference>
<dbReference type="PRINTS" id="PR00081">
    <property type="entry name" value="GDHRDH"/>
</dbReference>
<dbReference type="PRINTS" id="PR00080">
    <property type="entry name" value="SDRFAMILY"/>
</dbReference>
<dbReference type="SMART" id="SM00822">
    <property type="entry name" value="PKS_KR"/>
    <property type="match status" value="1"/>
</dbReference>
<dbReference type="SUPFAM" id="SSF51735">
    <property type="entry name" value="NAD(P)-binding Rossmann-fold domains"/>
    <property type="match status" value="1"/>
</dbReference>
<dbReference type="PROSITE" id="PS00061">
    <property type="entry name" value="ADH_SHORT"/>
    <property type="match status" value="1"/>
</dbReference>
<keyword id="KW-0470">Melanin biosynthesis</keyword>
<keyword id="KW-0521">NADP</keyword>
<keyword id="KW-0560">Oxidoreductase</keyword>
<keyword id="KW-1185">Reference proteome</keyword>
<protein>
    <recommendedName>
        <fullName evidence="6">Tetrahydroxynaphthalene reductase PfmaG</fullName>
        <ecNumber evidence="4">1.1.1.252</ecNumber>
    </recommendedName>
    <alternativeName>
        <fullName evidence="5">Conidial pigment biosynthesis cluster protein G</fullName>
    </alternativeName>
</protein>
<reference key="1">
    <citation type="journal article" date="2015" name="BMC Genomics">
        <title>Genomic and transcriptomic analysis of the endophytic fungus Pestalotiopsis fici reveals its lifestyle and high potential for synthesis of natural products.</title>
        <authorList>
            <person name="Wang X."/>
            <person name="Zhang X."/>
            <person name="Liu L."/>
            <person name="Xiang M."/>
            <person name="Wang W."/>
            <person name="Sun X."/>
            <person name="Che Y."/>
            <person name="Guo L."/>
            <person name="Liu G."/>
            <person name="Guo L."/>
            <person name="Wang C."/>
            <person name="Yin W.B."/>
            <person name="Stadler M."/>
            <person name="Zhang X."/>
            <person name="Liu X."/>
        </authorList>
    </citation>
    <scope>NUCLEOTIDE SEQUENCE [LARGE SCALE GENOMIC DNA]</scope>
    <source>
        <strain>W106-1 / CGMCC3.15140</strain>
    </source>
</reference>
<reference key="2">
    <citation type="journal article" date="2017" name="Mol. Microbiol.">
        <title>A cryptic pigment biosynthetic pathway uncovered by heterologous expression is essential for conidial development in Pestalotiopsis fici.</title>
        <authorList>
            <person name="Zhang P."/>
            <person name="Wang X."/>
            <person name="Fan A."/>
            <person name="Zheng Y."/>
            <person name="Liu X."/>
            <person name="Wang S."/>
            <person name="Zou H."/>
            <person name="Oakley B.R."/>
            <person name="Keller N.P."/>
            <person name="Yin W.B."/>
        </authorList>
    </citation>
    <scope>FUNCTION</scope>
    <scope>DISRUPTION PHENOTYPE</scope>
    <scope>INDUCTION</scope>
    <scope>PATHWAY</scope>
</reference>
<reference key="3">
    <citation type="journal article" date="2019" name="Mol. Microbiol.">
        <title>Two transcription factors cooperatively regulate DHN melanin biosynthesis and development in Pestalotiopsis fici.</title>
        <authorList>
            <person name="Zhang P."/>
            <person name="Zhou S."/>
            <person name="Wang G."/>
            <person name="An Z."/>
            <person name="Liu X."/>
            <person name="Li K."/>
            <person name="Yin W.B."/>
        </authorList>
    </citation>
    <scope>INDUCTION</scope>
    <scope>FUNCTION</scope>
    <scope>CATALYTIC ACTIVITY</scope>
    <scope>PATHWAY</scope>
</reference>
<name>PFMAG_PESFW</name>
<proteinExistence type="evidence at protein level"/>
<sequence>MSPSAIHNITSDLPSSQQHRPFAGKVALITGSGRGIGRGIALELGKRGASCIINYAKSAGAANEVVAELAKLGSKSIALQADISKPADVAALFEKALKHYGHIDFAISNSGMEVWCEETEVTPELFDQVFNLNTRGQFFVAQNALKHCSEGGRIILTSSIAAQMTGIPNHALYAGSKAAVEGFARSFAVDCGRKRITCNALAPGGIQTDMFDENSWHYVPGGYQGMNIDTIKDGLAKMCPLNRVGTPADIGKIVCMLVSDEGEWINGQVLRCSGGGV</sequence>
<gene>
    <name evidence="5" type="primary">PfmaG</name>
    <name type="ORF">PFICI_07103</name>
</gene>
<accession>W3XAA0</accession>
<feature type="chain" id="PRO_0000445353" description="Tetrahydroxynaphthalene reductase PfmaG">
    <location>
        <begin position="1"/>
        <end position="277"/>
    </location>
</feature>
<feature type="active site" description="Proton donor" evidence="2">
    <location>
        <position position="158"/>
    </location>
</feature>
<feature type="active site" description="Proton donor" evidence="2">
    <location>
        <position position="159"/>
    </location>
</feature>
<feature type="active site" description="Proton donor" evidence="2">
    <location>
        <position position="173"/>
    </location>
</feature>
<feature type="active site" description="Lowers pKa of active site Tyr" evidence="2">
    <location>
        <position position="177"/>
    </location>
</feature>
<feature type="binding site" evidence="1">
    <location>
        <position position="36"/>
    </location>
    <ligand>
        <name>NADP(+)</name>
        <dbReference type="ChEBI" id="CHEBI:58349"/>
    </ligand>
</feature>
<feature type="binding site" evidence="1">
    <location>
        <position position="82"/>
    </location>
    <ligand>
        <name>NADP(+)</name>
        <dbReference type="ChEBI" id="CHEBI:58349"/>
    </ligand>
</feature>
<feature type="binding site" evidence="2">
    <location>
        <position position="109"/>
    </location>
    <ligand>
        <name>NADP(+)</name>
        <dbReference type="ChEBI" id="CHEBI:58349"/>
    </ligand>
</feature>
<feature type="binding site" evidence="2">
    <location>
        <position position="173"/>
    </location>
    <ligand>
        <name>NADP(+)</name>
        <dbReference type="ChEBI" id="CHEBI:58349"/>
    </ligand>
</feature>
<feature type="binding site" evidence="2">
    <location>
        <position position="177"/>
    </location>
    <ligand>
        <name>NADP(+)</name>
        <dbReference type="ChEBI" id="CHEBI:58349"/>
    </ligand>
</feature>
<feature type="binding site" evidence="2">
    <location>
        <position position="206"/>
    </location>
    <ligand>
        <name>NADP(+)</name>
        <dbReference type="ChEBI" id="CHEBI:58349"/>
    </ligand>
</feature>
<feature type="binding site" evidence="1">
    <location>
        <position position="208"/>
    </location>
    <ligand>
        <name>NADP(+)</name>
        <dbReference type="ChEBI" id="CHEBI:58349"/>
    </ligand>
</feature>
<comment type="function">
    <text evidence="3 4 8 9">Tetrahydroxynaphthalene reductase; part of the gene cluster that mediates the biosynthesis of dihydroxynaphthalene (DHN)-melanin, a bluish-green pigment forming a dark layer in the conidial wall that protects the conidia from UV radiations (PubMed:28517364). The first step of the pathway is the production of the pentaketide 1,3,6,8-tetrahydroxynaphthalene (1,3,6,8-THN or T4HN) by the polyketide synthase PfmaE though condensation of acetyl-CoA with malonyl-CoA. T4HN is not stable and easily oxidizes into the stable form flaviolin (PubMed:28517364). T4HN is also substrate of the hydroxynaphthalene reductase PfmaG to yield scytalone (PubMed:28517364). The scytalone dehydratase PfmaJ then reduces scytalone to 1,3,8-THN (PubMed:31116900). 1,3,8-THN is then substrate of the hydroxynaphthalene reductase PfmaI to yield vermelone (Probable). Vermelone is further converted by the multicopper oxidase PfmaD to 1,8-DHN (Probable). Finally the laccase PFICI_06862 transforms 1,8-DHN to DHN-melanin (Probable). The roles of the 5-oxoprolinase PfmaA and the proline iminopeptidase PfmaB within the cluster have not been elucidated yet (Probable).</text>
</comment>
<comment type="catalytic activity">
    <reaction evidence="4">
        <text>scytalone + NADP(+) = naphthalene-1,3,6,8-tetrol + NADPH + H(+)</text>
        <dbReference type="Rhea" id="RHEA:21908"/>
        <dbReference type="ChEBI" id="CHEBI:15378"/>
        <dbReference type="ChEBI" id="CHEBI:16945"/>
        <dbReference type="ChEBI" id="CHEBI:18365"/>
        <dbReference type="ChEBI" id="CHEBI:57783"/>
        <dbReference type="ChEBI" id="CHEBI:58349"/>
        <dbReference type="EC" id="1.1.1.252"/>
    </reaction>
</comment>
<comment type="pathway">
    <text evidence="3 4">Pigment biosynthesis; melanin biosynthesis.</text>
</comment>
<comment type="induction">
    <text evidence="3 4">Expression is positively regulazed by the cluster-specific transcription factor pfmaF.</text>
</comment>
<comment type="disruption phenotype">
    <text evidence="3">Abolishes the production of scytalone.</text>
</comment>
<comment type="similarity">
    <text evidence="7">Belongs to the short-chain dehydrogenases/reductases (SDR) family.</text>
</comment>